<keyword id="KW-0012">Acyltransferase</keyword>
<keyword id="KW-0441">Lipid A biosynthesis</keyword>
<keyword id="KW-0444">Lipid biosynthesis</keyword>
<keyword id="KW-0443">Lipid metabolism</keyword>
<keyword id="KW-1185">Reference proteome</keyword>
<keyword id="KW-0677">Repeat</keyword>
<keyword id="KW-0808">Transferase</keyword>
<feature type="chain" id="PRO_1000127681" description="UDP-3-O-acylglucosamine N-acyltransferase">
    <location>
        <begin position="1"/>
        <end position="342"/>
    </location>
</feature>
<feature type="active site" description="Proton acceptor" evidence="1">
    <location>
        <position position="242"/>
    </location>
</feature>
<dbReference type="EC" id="2.3.1.191" evidence="1"/>
<dbReference type="EMBL" id="CP001013">
    <property type="protein sequence ID" value="ACB35105.1"/>
    <property type="molecule type" value="Genomic_DNA"/>
</dbReference>
<dbReference type="RefSeq" id="WP_012347859.1">
    <property type="nucleotide sequence ID" value="NC_010524.1"/>
</dbReference>
<dbReference type="SMR" id="B1XXI5"/>
<dbReference type="STRING" id="395495.Lcho_2840"/>
<dbReference type="KEGG" id="lch:Lcho_2840"/>
<dbReference type="eggNOG" id="COG1044">
    <property type="taxonomic scope" value="Bacteria"/>
</dbReference>
<dbReference type="HOGENOM" id="CLU_049865_0_1_4"/>
<dbReference type="OrthoDB" id="9784739at2"/>
<dbReference type="UniPathway" id="UPA00973"/>
<dbReference type="Proteomes" id="UP000001693">
    <property type="component" value="Chromosome"/>
</dbReference>
<dbReference type="GO" id="GO:0016020">
    <property type="term" value="C:membrane"/>
    <property type="evidence" value="ECO:0007669"/>
    <property type="project" value="GOC"/>
</dbReference>
<dbReference type="GO" id="GO:0016410">
    <property type="term" value="F:N-acyltransferase activity"/>
    <property type="evidence" value="ECO:0007669"/>
    <property type="project" value="InterPro"/>
</dbReference>
<dbReference type="GO" id="GO:0009245">
    <property type="term" value="P:lipid A biosynthetic process"/>
    <property type="evidence" value="ECO:0007669"/>
    <property type="project" value="UniProtKB-UniRule"/>
</dbReference>
<dbReference type="CDD" id="cd03352">
    <property type="entry name" value="LbH_LpxD"/>
    <property type="match status" value="1"/>
</dbReference>
<dbReference type="Gene3D" id="2.160.10.10">
    <property type="entry name" value="Hexapeptide repeat proteins"/>
    <property type="match status" value="1"/>
</dbReference>
<dbReference type="Gene3D" id="3.40.1390.10">
    <property type="entry name" value="MurE/MurF, N-terminal domain"/>
    <property type="match status" value="1"/>
</dbReference>
<dbReference type="HAMAP" id="MF_00523">
    <property type="entry name" value="LpxD"/>
    <property type="match status" value="1"/>
</dbReference>
<dbReference type="InterPro" id="IPR001451">
    <property type="entry name" value="Hexapep"/>
</dbReference>
<dbReference type="InterPro" id="IPR018357">
    <property type="entry name" value="Hexapep_transf_CS"/>
</dbReference>
<dbReference type="InterPro" id="IPR007691">
    <property type="entry name" value="LpxD"/>
</dbReference>
<dbReference type="InterPro" id="IPR011004">
    <property type="entry name" value="Trimer_LpxA-like_sf"/>
</dbReference>
<dbReference type="InterPro" id="IPR020573">
    <property type="entry name" value="UDP_GlcNAc_AcTrfase_non-rep"/>
</dbReference>
<dbReference type="NCBIfam" id="TIGR01853">
    <property type="entry name" value="lipid_A_lpxD"/>
    <property type="match status" value="1"/>
</dbReference>
<dbReference type="NCBIfam" id="NF002060">
    <property type="entry name" value="PRK00892.1"/>
    <property type="match status" value="1"/>
</dbReference>
<dbReference type="PANTHER" id="PTHR43378">
    <property type="entry name" value="UDP-3-O-ACYLGLUCOSAMINE N-ACYLTRANSFERASE"/>
    <property type="match status" value="1"/>
</dbReference>
<dbReference type="PANTHER" id="PTHR43378:SF2">
    <property type="entry name" value="UDP-3-O-ACYLGLUCOSAMINE N-ACYLTRANSFERASE 1, MITOCHONDRIAL-RELATED"/>
    <property type="match status" value="1"/>
</dbReference>
<dbReference type="Pfam" id="PF00132">
    <property type="entry name" value="Hexapep"/>
    <property type="match status" value="1"/>
</dbReference>
<dbReference type="Pfam" id="PF04613">
    <property type="entry name" value="LpxD"/>
    <property type="match status" value="1"/>
</dbReference>
<dbReference type="SUPFAM" id="SSF51161">
    <property type="entry name" value="Trimeric LpxA-like enzymes"/>
    <property type="match status" value="1"/>
</dbReference>
<dbReference type="PROSITE" id="PS00101">
    <property type="entry name" value="HEXAPEP_TRANSFERASES"/>
    <property type="match status" value="2"/>
</dbReference>
<organism>
    <name type="scientific">Leptothrix cholodnii (strain ATCC 51168 / LMG 8142 / SP-6)</name>
    <name type="common">Leptothrix discophora (strain SP-6)</name>
    <dbReference type="NCBI Taxonomy" id="395495"/>
    <lineage>
        <taxon>Bacteria</taxon>
        <taxon>Pseudomonadati</taxon>
        <taxon>Pseudomonadota</taxon>
        <taxon>Betaproteobacteria</taxon>
        <taxon>Burkholderiales</taxon>
        <taxon>Sphaerotilaceae</taxon>
        <taxon>Leptothrix</taxon>
    </lineage>
</organism>
<accession>B1XXI5</accession>
<gene>
    <name evidence="1" type="primary">lpxD</name>
    <name type="ordered locus">Lcho_2840</name>
</gene>
<reference key="1">
    <citation type="submission" date="2008-03" db="EMBL/GenBank/DDBJ databases">
        <title>Complete sequence of Leptothrix cholodnii SP-6.</title>
        <authorList>
            <consortium name="US DOE Joint Genome Institute"/>
            <person name="Copeland A."/>
            <person name="Lucas S."/>
            <person name="Lapidus A."/>
            <person name="Glavina del Rio T."/>
            <person name="Dalin E."/>
            <person name="Tice H."/>
            <person name="Bruce D."/>
            <person name="Goodwin L."/>
            <person name="Pitluck S."/>
            <person name="Chertkov O."/>
            <person name="Brettin T."/>
            <person name="Detter J.C."/>
            <person name="Han C."/>
            <person name="Kuske C.R."/>
            <person name="Schmutz J."/>
            <person name="Larimer F."/>
            <person name="Land M."/>
            <person name="Hauser L."/>
            <person name="Kyrpides N."/>
            <person name="Lykidis A."/>
            <person name="Emerson D."/>
            <person name="Richardson P."/>
        </authorList>
    </citation>
    <scope>NUCLEOTIDE SEQUENCE [LARGE SCALE GENOMIC DNA]</scope>
    <source>
        <strain>ATCC 51168 / LMG 8142 / SP-6</strain>
    </source>
</reference>
<proteinExistence type="inferred from homology"/>
<name>LPXD_LEPCP</name>
<sequence>MQAALHELHAALGGELLGDPSLVIRRIGPLASADAETISFVSNARYRAQLAQTAAACVIVAPALAEDAAQRGAAIVTPDPYHYFARLTQWWAARLRVAPPSGVHPSAVVAADVRLGEGVSVGPLTVIEAGAVLGDGVVIASQCHIGAGVQIGAQTRLAPHVTLMPGTRLGQRCLLHGGVVIGADGFGFAPHQGRWEKIEQLGGVVVGDDVEIGANTCIDRGALDDTVIGEGVKLDNLIQIGHNVQIGAHSAMAGCAGVAGSARIGRGCTVGGGAIVLGHLELADGVHISAASVVMRSIKQPGQYSGVFPIDDNASWEKNAATLRQLHTLRDRLRTLEKKSSP</sequence>
<comment type="function">
    <text evidence="1">Catalyzes the N-acylation of UDP-3-O-acylglucosamine using 3-hydroxyacyl-ACP as the acyl donor. Is involved in the biosynthesis of lipid A, a phosphorylated glycolipid that anchors the lipopolysaccharide to the outer membrane of the cell.</text>
</comment>
<comment type="catalytic activity">
    <reaction evidence="1">
        <text>a UDP-3-O-[(3R)-3-hydroxyacyl]-alpha-D-glucosamine + a (3R)-hydroxyacyl-[ACP] = a UDP-2-N,3-O-bis[(3R)-3-hydroxyacyl]-alpha-D-glucosamine + holo-[ACP] + H(+)</text>
        <dbReference type="Rhea" id="RHEA:53836"/>
        <dbReference type="Rhea" id="RHEA-COMP:9685"/>
        <dbReference type="Rhea" id="RHEA-COMP:9945"/>
        <dbReference type="ChEBI" id="CHEBI:15378"/>
        <dbReference type="ChEBI" id="CHEBI:64479"/>
        <dbReference type="ChEBI" id="CHEBI:78827"/>
        <dbReference type="ChEBI" id="CHEBI:137740"/>
        <dbReference type="ChEBI" id="CHEBI:137748"/>
        <dbReference type="EC" id="2.3.1.191"/>
    </reaction>
</comment>
<comment type="pathway">
    <text evidence="1">Bacterial outer membrane biogenesis; LPS lipid A biosynthesis.</text>
</comment>
<comment type="subunit">
    <text evidence="1">Homotrimer.</text>
</comment>
<comment type="similarity">
    <text evidence="1">Belongs to the transferase hexapeptide repeat family. LpxD subfamily.</text>
</comment>
<protein>
    <recommendedName>
        <fullName evidence="1">UDP-3-O-acylglucosamine N-acyltransferase</fullName>
        <ecNumber evidence="1">2.3.1.191</ecNumber>
    </recommendedName>
</protein>
<evidence type="ECO:0000255" key="1">
    <source>
        <dbReference type="HAMAP-Rule" id="MF_00523"/>
    </source>
</evidence>